<comment type="function">
    <text evidence="1">Catalyzes the attachment of proline to tRNA(Pro) in a two-step reaction: proline is first activated by ATP to form Pro-AMP and then transferred to the acceptor end of tRNA(Pro).</text>
</comment>
<comment type="catalytic activity">
    <reaction evidence="1">
        <text>tRNA(Pro) + L-proline + ATP = L-prolyl-tRNA(Pro) + AMP + diphosphate</text>
        <dbReference type="Rhea" id="RHEA:14305"/>
        <dbReference type="Rhea" id="RHEA-COMP:9700"/>
        <dbReference type="Rhea" id="RHEA-COMP:9702"/>
        <dbReference type="ChEBI" id="CHEBI:30616"/>
        <dbReference type="ChEBI" id="CHEBI:33019"/>
        <dbReference type="ChEBI" id="CHEBI:60039"/>
        <dbReference type="ChEBI" id="CHEBI:78442"/>
        <dbReference type="ChEBI" id="CHEBI:78532"/>
        <dbReference type="ChEBI" id="CHEBI:456215"/>
        <dbReference type="EC" id="6.1.1.15"/>
    </reaction>
</comment>
<comment type="subunit">
    <text evidence="1">Homodimer.</text>
</comment>
<comment type="subcellular location">
    <subcellularLocation>
        <location evidence="1">Cytoplasm</location>
    </subcellularLocation>
</comment>
<comment type="domain">
    <text evidence="1">Consists of three domains: the N-terminal catalytic domain, the anticodon-binding domain and the C-terminal extension.</text>
</comment>
<comment type="similarity">
    <text evidence="1">Belongs to the class-II aminoacyl-tRNA synthetase family. ProS type 3 subfamily.</text>
</comment>
<name>SYP_OCEIH</name>
<dbReference type="EC" id="6.1.1.15" evidence="1"/>
<dbReference type="EMBL" id="BA000028">
    <property type="protein sequence ID" value="BAC12522.1"/>
    <property type="molecule type" value="Genomic_DNA"/>
</dbReference>
<dbReference type="RefSeq" id="WP_011064969.1">
    <property type="nucleotide sequence ID" value="NC_004193.1"/>
</dbReference>
<dbReference type="SMR" id="Q8ESQ5"/>
<dbReference type="STRING" id="221109.gene:10732770"/>
<dbReference type="KEGG" id="oih:OB0566"/>
<dbReference type="eggNOG" id="COG0441">
    <property type="taxonomic scope" value="Bacteria"/>
</dbReference>
<dbReference type="HOGENOM" id="CLU_001882_4_2_9"/>
<dbReference type="OrthoDB" id="9809052at2"/>
<dbReference type="PhylomeDB" id="Q8ESQ5"/>
<dbReference type="Proteomes" id="UP000000822">
    <property type="component" value="Chromosome"/>
</dbReference>
<dbReference type="GO" id="GO:0017101">
    <property type="term" value="C:aminoacyl-tRNA synthetase multienzyme complex"/>
    <property type="evidence" value="ECO:0007669"/>
    <property type="project" value="TreeGrafter"/>
</dbReference>
<dbReference type="GO" id="GO:0005737">
    <property type="term" value="C:cytoplasm"/>
    <property type="evidence" value="ECO:0007669"/>
    <property type="project" value="UniProtKB-SubCell"/>
</dbReference>
<dbReference type="GO" id="GO:0005524">
    <property type="term" value="F:ATP binding"/>
    <property type="evidence" value="ECO:0007669"/>
    <property type="project" value="UniProtKB-UniRule"/>
</dbReference>
<dbReference type="GO" id="GO:0140096">
    <property type="term" value="F:catalytic activity, acting on a protein"/>
    <property type="evidence" value="ECO:0007669"/>
    <property type="project" value="UniProtKB-ARBA"/>
</dbReference>
<dbReference type="GO" id="GO:0004827">
    <property type="term" value="F:proline-tRNA ligase activity"/>
    <property type="evidence" value="ECO:0007669"/>
    <property type="project" value="UniProtKB-UniRule"/>
</dbReference>
<dbReference type="GO" id="GO:0016740">
    <property type="term" value="F:transferase activity"/>
    <property type="evidence" value="ECO:0007669"/>
    <property type="project" value="UniProtKB-ARBA"/>
</dbReference>
<dbReference type="GO" id="GO:0006433">
    <property type="term" value="P:prolyl-tRNA aminoacylation"/>
    <property type="evidence" value="ECO:0007669"/>
    <property type="project" value="UniProtKB-UniRule"/>
</dbReference>
<dbReference type="CDD" id="cd00862">
    <property type="entry name" value="ProRS_anticodon_zinc"/>
    <property type="match status" value="1"/>
</dbReference>
<dbReference type="CDD" id="cd00778">
    <property type="entry name" value="ProRS_core_arch_euk"/>
    <property type="match status" value="1"/>
</dbReference>
<dbReference type="FunFam" id="3.40.50.800:FF:000005">
    <property type="entry name" value="bifunctional glutamate/proline--tRNA ligase"/>
    <property type="match status" value="1"/>
</dbReference>
<dbReference type="FunFam" id="3.30.110.30:FF:000005">
    <property type="entry name" value="Proline--tRNA ligase"/>
    <property type="match status" value="1"/>
</dbReference>
<dbReference type="FunFam" id="3.30.930.10:FF:000037">
    <property type="entry name" value="Proline--tRNA ligase"/>
    <property type="match status" value="1"/>
</dbReference>
<dbReference type="Gene3D" id="3.40.50.800">
    <property type="entry name" value="Anticodon-binding domain"/>
    <property type="match status" value="1"/>
</dbReference>
<dbReference type="Gene3D" id="3.30.930.10">
    <property type="entry name" value="Bira Bifunctional Protein, Domain 2"/>
    <property type="match status" value="1"/>
</dbReference>
<dbReference type="Gene3D" id="3.30.110.30">
    <property type="entry name" value="C-terminal domain of ProRS"/>
    <property type="match status" value="1"/>
</dbReference>
<dbReference type="HAMAP" id="MF_01571">
    <property type="entry name" value="Pro_tRNA_synth_type3"/>
    <property type="match status" value="1"/>
</dbReference>
<dbReference type="InterPro" id="IPR002314">
    <property type="entry name" value="aa-tRNA-synt_IIb"/>
</dbReference>
<dbReference type="InterPro" id="IPR006195">
    <property type="entry name" value="aa-tRNA-synth_II"/>
</dbReference>
<dbReference type="InterPro" id="IPR045864">
    <property type="entry name" value="aa-tRNA-synth_II/BPL/LPL"/>
</dbReference>
<dbReference type="InterPro" id="IPR004154">
    <property type="entry name" value="Anticodon-bd"/>
</dbReference>
<dbReference type="InterPro" id="IPR036621">
    <property type="entry name" value="Anticodon-bd_dom_sf"/>
</dbReference>
<dbReference type="InterPro" id="IPR002316">
    <property type="entry name" value="Pro-tRNA-ligase_IIa"/>
</dbReference>
<dbReference type="InterPro" id="IPR004499">
    <property type="entry name" value="Pro-tRNA-ligase_IIa_arc-type"/>
</dbReference>
<dbReference type="InterPro" id="IPR016061">
    <property type="entry name" value="Pro-tRNA_ligase_II_C"/>
</dbReference>
<dbReference type="InterPro" id="IPR017449">
    <property type="entry name" value="Pro-tRNA_synth_II"/>
</dbReference>
<dbReference type="InterPro" id="IPR033721">
    <property type="entry name" value="ProRS_core_arch_euk"/>
</dbReference>
<dbReference type="NCBIfam" id="TIGR00408">
    <property type="entry name" value="proS_fam_I"/>
    <property type="match status" value="1"/>
</dbReference>
<dbReference type="PANTHER" id="PTHR43382:SF2">
    <property type="entry name" value="BIFUNCTIONAL GLUTAMATE_PROLINE--TRNA LIGASE"/>
    <property type="match status" value="1"/>
</dbReference>
<dbReference type="PANTHER" id="PTHR43382">
    <property type="entry name" value="PROLYL-TRNA SYNTHETASE"/>
    <property type="match status" value="1"/>
</dbReference>
<dbReference type="Pfam" id="PF03129">
    <property type="entry name" value="HGTP_anticodon"/>
    <property type="match status" value="1"/>
</dbReference>
<dbReference type="Pfam" id="PF09180">
    <property type="entry name" value="ProRS-C_1"/>
    <property type="match status" value="1"/>
</dbReference>
<dbReference type="Pfam" id="PF00587">
    <property type="entry name" value="tRNA-synt_2b"/>
    <property type="match status" value="1"/>
</dbReference>
<dbReference type="PRINTS" id="PR01046">
    <property type="entry name" value="TRNASYNTHPRO"/>
</dbReference>
<dbReference type="SMART" id="SM00946">
    <property type="entry name" value="ProRS-C_1"/>
    <property type="match status" value="1"/>
</dbReference>
<dbReference type="SUPFAM" id="SSF64586">
    <property type="entry name" value="C-terminal domain of ProRS"/>
    <property type="match status" value="1"/>
</dbReference>
<dbReference type="SUPFAM" id="SSF52954">
    <property type="entry name" value="Class II aaRS ABD-related"/>
    <property type="match status" value="1"/>
</dbReference>
<dbReference type="SUPFAM" id="SSF55681">
    <property type="entry name" value="Class II aaRS and biotin synthetases"/>
    <property type="match status" value="1"/>
</dbReference>
<dbReference type="PROSITE" id="PS50862">
    <property type="entry name" value="AA_TRNA_LIGASE_II"/>
    <property type="match status" value="1"/>
</dbReference>
<keyword id="KW-0030">Aminoacyl-tRNA synthetase</keyword>
<keyword id="KW-0067">ATP-binding</keyword>
<keyword id="KW-0963">Cytoplasm</keyword>
<keyword id="KW-0436">Ligase</keyword>
<keyword id="KW-0547">Nucleotide-binding</keyword>
<keyword id="KW-0648">Protein biosynthesis</keyword>
<keyword id="KW-1185">Reference proteome</keyword>
<accession>Q8ESQ5</accession>
<sequence>MGKKNKQFVEKITAMEDDFAQWYTDVVKQADLVDYGQVRGTMIIKPYGYAIWENIKNELDRMFKETGHTNVAFPLFIPESLLQKEKDHVEGFAPEVAWVTHGGEEELTERIAVRPTSEVLFCDYYSNNIHSYRDLPKLYNQWGNVVRWEKTTRPFLRSSEFHWQEGHTAHATDEEATEETNRMLETYAKLVEEYLAVPVLKGRKTDKEKFAGAKFTLTIEALMHDGKALQSGTSHHFGTGFAEAFDINYLDKDGKSQFVHQTSWGLSTRIMGALIMVHGDNRGLVVPPKIAPTQAMIVPIAQHKEGVLDKAYELRDKLAKVARVDIDGSDKMPGWKFNEYEMKGIPVRVEMGPKDIEKEQVVLVRRDTGEKEFVPVAEVETRLVELLDEVQSNLYQRALDHRNEMTTVAKDMDEFKEKIEEGGFIKAMWCGDVSCEESIKEETTATSRCIPYEEEKVADTCVCCGKKAKELVYWARAY</sequence>
<protein>
    <recommendedName>
        <fullName evidence="1">Proline--tRNA ligase</fullName>
        <ecNumber evidence="1">6.1.1.15</ecNumber>
    </recommendedName>
    <alternativeName>
        <fullName evidence="1">Prolyl-tRNA synthetase</fullName>
        <shortName evidence="1">ProRS</shortName>
    </alternativeName>
</protein>
<proteinExistence type="inferred from homology"/>
<evidence type="ECO:0000255" key="1">
    <source>
        <dbReference type="HAMAP-Rule" id="MF_01571"/>
    </source>
</evidence>
<gene>
    <name evidence="1" type="primary">proS</name>
    <name type="ordered locus">OB0566</name>
</gene>
<organism>
    <name type="scientific">Oceanobacillus iheyensis (strain DSM 14371 / CIP 107618 / JCM 11309 / KCTC 3954 / HTE831)</name>
    <dbReference type="NCBI Taxonomy" id="221109"/>
    <lineage>
        <taxon>Bacteria</taxon>
        <taxon>Bacillati</taxon>
        <taxon>Bacillota</taxon>
        <taxon>Bacilli</taxon>
        <taxon>Bacillales</taxon>
        <taxon>Bacillaceae</taxon>
        <taxon>Oceanobacillus</taxon>
    </lineage>
</organism>
<reference key="1">
    <citation type="journal article" date="2002" name="Nucleic Acids Res.">
        <title>Genome sequence of Oceanobacillus iheyensis isolated from the Iheya Ridge and its unexpected adaptive capabilities to extreme environments.</title>
        <authorList>
            <person name="Takami H."/>
            <person name="Takaki Y."/>
            <person name="Uchiyama I."/>
        </authorList>
    </citation>
    <scope>NUCLEOTIDE SEQUENCE [LARGE SCALE GENOMIC DNA]</scope>
    <source>
        <strain>DSM 14371 / CIP 107618 / JCM 11309 / KCTC 3954 / HTE831</strain>
    </source>
</reference>
<feature type="chain" id="PRO_0000249143" description="Proline--tRNA ligase">
    <location>
        <begin position="1"/>
        <end position="478"/>
    </location>
</feature>